<dbReference type="EC" id="3.6.4.13" evidence="1"/>
<dbReference type="EMBL" id="CU928145">
    <property type="protein sequence ID" value="CAV00884.1"/>
    <property type="molecule type" value="Genomic_DNA"/>
</dbReference>
<dbReference type="RefSeq" id="WP_000047499.1">
    <property type="nucleotide sequence ID" value="NZ_CP028304.1"/>
</dbReference>
<dbReference type="SMR" id="B7L8B6"/>
<dbReference type="GeneID" id="93778164"/>
<dbReference type="KEGG" id="eck:EC55989_4251"/>
<dbReference type="HOGENOM" id="CLU_003041_1_3_6"/>
<dbReference type="Proteomes" id="UP000000746">
    <property type="component" value="Chromosome"/>
</dbReference>
<dbReference type="GO" id="GO:0005829">
    <property type="term" value="C:cytosol"/>
    <property type="evidence" value="ECO:0007669"/>
    <property type="project" value="TreeGrafter"/>
</dbReference>
<dbReference type="GO" id="GO:0005524">
    <property type="term" value="F:ATP binding"/>
    <property type="evidence" value="ECO:0007669"/>
    <property type="project" value="UniProtKB-UniRule"/>
</dbReference>
<dbReference type="GO" id="GO:0016887">
    <property type="term" value="F:ATP hydrolysis activity"/>
    <property type="evidence" value="ECO:0007669"/>
    <property type="project" value="RHEA"/>
</dbReference>
<dbReference type="GO" id="GO:0003723">
    <property type="term" value="F:RNA binding"/>
    <property type="evidence" value="ECO:0007669"/>
    <property type="project" value="UniProtKB-UniRule"/>
</dbReference>
<dbReference type="GO" id="GO:0003724">
    <property type="term" value="F:RNA helicase activity"/>
    <property type="evidence" value="ECO:0007669"/>
    <property type="project" value="UniProtKB-UniRule"/>
</dbReference>
<dbReference type="GO" id="GO:0006401">
    <property type="term" value="P:RNA catabolic process"/>
    <property type="evidence" value="ECO:0007669"/>
    <property type="project" value="UniProtKB-UniRule"/>
</dbReference>
<dbReference type="CDD" id="cd00268">
    <property type="entry name" value="DEADc"/>
    <property type="match status" value="1"/>
</dbReference>
<dbReference type="CDD" id="cd18787">
    <property type="entry name" value="SF2_C_DEAD"/>
    <property type="match status" value="1"/>
</dbReference>
<dbReference type="FunFam" id="3.40.50.300:FF:000008">
    <property type="entry name" value="ATP-dependent RNA helicase RhlB"/>
    <property type="match status" value="1"/>
</dbReference>
<dbReference type="FunFam" id="3.40.50.300:FF:000312">
    <property type="entry name" value="ATP-dependent RNA helicase RhlB"/>
    <property type="match status" value="1"/>
</dbReference>
<dbReference type="Gene3D" id="3.40.50.300">
    <property type="entry name" value="P-loop containing nucleotide triphosphate hydrolases"/>
    <property type="match status" value="2"/>
</dbReference>
<dbReference type="HAMAP" id="MF_00661">
    <property type="entry name" value="DEAD_helicase_RhlB"/>
    <property type="match status" value="1"/>
</dbReference>
<dbReference type="InterPro" id="IPR011545">
    <property type="entry name" value="DEAD/DEAH_box_helicase_dom"/>
</dbReference>
<dbReference type="InterPro" id="IPR050079">
    <property type="entry name" value="DEAD_box_RNA_helicase"/>
</dbReference>
<dbReference type="InterPro" id="IPR014001">
    <property type="entry name" value="Helicase_ATP-bd"/>
</dbReference>
<dbReference type="InterPro" id="IPR001650">
    <property type="entry name" value="Helicase_C-like"/>
</dbReference>
<dbReference type="InterPro" id="IPR027417">
    <property type="entry name" value="P-loop_NTPase"/>
</dbReference>
<dbReference type="InterPro" id="IPR000629">
    <property type="entry name" value="RNA-helicase_DEAD-box_CS"/>
</dbReference>
<dbReference type="InterPro" id="IPR023554">
    <property type="entry name" value="RNA_helicase_ATP-dep_RhlB"/>
</dbReference>
<dbReference type="InterPro" id="IPR014014">
    <property type="entry name" value="RNA_helicase_DEAD_Q_motif"/>
</dbReference>
<dbReference type="NCBIfam" id="NF003419">
    <property type="entry name" value="PRK04837.1"/>
    <property type="match status" value="1"/>
</dbReference>
<dbReference type="PANTHER" id="PTHR47959:SF10">
    <property type="entry name" value="ATP-DEPENDENT RNA HELICASE RHLB"/>
    <property type="match status" value="1"/>
</dbReference>
<dbReference type="PANTHER" id="PTHR47959">
    <property type="entry name" value="ATP-DEPENDENT RNA HELICASE RHLE-RELATED"/>
    <property type="match status" value="1"/>
</dbReference>
<dbReference type="Pfam" id="PF00270">
    <property type="entry name" value="DEAD"/>
    <property type="match status" value="1"/>
</dbReference>
<dbReference type="Pfam" id="PF00271">
    <property type="entry name" value="Helicase_C"/>
    <property type="match status" value="1"/>
</dbReference>
<dbReference type="SMART" id="SM00487">
    <property type="entry name" value="DEXDc"/>
    <property type="match status" value="1"/>
</dbReference>
<dbReference type="SMART" id="SM00490">
    <property type="entry name" value="HELICc"/>
    <property type="match status" value="1"/>
</dbReference>
<dbReference type="SUPFAM" id="SSF52540">
    <property type="entry name" value="P-loop containing nucleoside triphosphate hydrolases"/>
    <property type="match status" value="1"/>
</dbReference>
<dbReference type="PROSITE" id="PS00039">
    <property type="entry name" value="DEAD_ATP_HELICASE"/>
    <property type="match status" value="1"/>
</dbReference>
<dbReference type="PROSITE" id="PS51192">
    <property type="entry name" value="HELICASE_ATP_BIND_1"/>
    <property type="match status" value="1"/>
</dbReference>
<dbReference type="PROSITE" id="PS51194">
    <property type="entry name" value="HELICASE_CTER"/>
    <property type="match status" value="1"/>
</dbReference>
<dbReference type="PROSITE" id="PS51195">
    <property type="entry name" value="Q_MOTIF"/>
    <property type="match status" value="1"/>
</dbReference>
<sequence>MSKTHLTEQKFSDFALHPKVVEALEKKGFHNCTPIQALALPLTLAGRDVAGQAQTGTGKTMAFLTSTFHYLLSHPAIADRKVNQPRALIMAPTRELAVQIHADAEPLAEATGLKLGLAYGGDGYDKQLKVLESGVDILIGTTGRLIDYAKQNHINLGAIQVVVLDEADRMYDLGFIKDIRWLFRRMPPANQRLNMLFSATLSYRVRELAFEQMNNAEYIEVEPEQKTGHRIKEELFYPSNEEKMRLLQTLIEEEWPDRAIIFANTKHRCEEIWGHLAADGHRVGLLTGDVAQKKRLRILDEFTRGDLDILVATDVAARGLHIPAVTHVFNYDLPDDCEDYVHRIGRTGRAGASGHSISLACEEYALNLPAIETYIGHSIPVSKYNPDALMTDLPKPLRLTRPRTGNGPRRTGAPRNRRRSG</sequence>
<protein>
    <recommendedName>
        <fullName evidence="1">ATP-dependent RNA helicase RhlB</fullName>
        <ecNumber evidence="1">3.6.4.13</ecNumber>
    </recommendedName>
</protein>
<reference key="1">
    <citation type="journal article" date="2009" name="PLoS Genet.">
        <title>Organised genome dynamics in the Escherichia coli species results in highly diverse adaptive paths.</title>
        <authorList>
            <person name="Touchon M."/>
            <person name="Hoede C."/>
            <person name="Tenaillon O."/>
            <person name="Barbe V."/>
            <person name="Baeriswyl S."/>
            <person name="Bidet P."/>
            <person name="Bingen E."/>
            <person name="Bonacorsi S."/>
            <person name="Bouchier C."/>
            <person name="Bouvet O."/>
            <person name="Calteau A."/>
            <person name="Chiapello H."/>
            <person name="Clermont O."/>
            <person name="Cruveiller S."/>
            <person name="Danchin A."/>
            <person name="Diard M."/>
            <person name="Dossat C."/>
            <person name="Karoui M.E."/>
            <person name="Frapy E."/>
            <person name="Garry L."/>
            <person name="Ghigo J.M."/>
            <person name="Gilles A.M."/>
            <person name="Johnson J."/>
            <person name="Le Bouguenec C."/>
            <person name="Lescat M."/>
            <person name="Mangenot S."/>
            <person name="Martinez-Jehanne V."/>
            <person name="Matic I."/>
            <person name="Nassif X."/>
            <person name="Oztas S."/>
            <person name="Petit M.A."/>
            <person name="Pichon C."/>
            <person name="Rouy Z."/>
            <person name="Ruf C.S."/>
            <person name="Schneider D."/>
            <person name="Tourret J."/>
            <person name="Vacherie B."/>
            <person name="Vallenet D."/>
            <person name="Medigue C."/>
            <person name="Rocha E.P.C."/>
            <person name="Denamur E."/>
        </authorList>
    </citation>
    <scope>NUCLEOTIDE SEQUENCE [LARGE SCALE GENOMIC DNA]</scope>
    <source>
        <strain>55989 / EAEC</strain>
    </source>
</reference>
<feature type="chain" id="PRO_1000147581" description="ATP-dependent RNA helicase RhlB">
    <location>
        <begin position="1"/>
        <end position="421"/>
    </location>
</feature>
<feature type="domain" description="Helicase ATP-binding" evidence="1">
    <location>
        <begin position="40"/>
        <end position="219"/>
    </location>
</feature>
<feature type="domain" description="Helicase C-terminal" evidence="1">
    <location>
        <begin position="245"/>
        <end position="390"/>
    </location>
</feature>
<feature type="region of interest" description="Disordered" evidence="2">
    <location>
        <begin position="392"/>
        <end position="421"/>
    </location>
</feature>
<feature type="short sequence motif" description="Q motif">
    <location>
        <begin position="9"/>
        <end position="37"/>
    </location>
</feature>
<feature type="short sequence motif" description="DEAD box">
    <location>
        <begin position="165"/>
        <end position="168"/>
    </location>
</feature>
<feature type="compositionally biased region" description="Low complexity" evidence="2">
    <location>
        <begin position="402"/>
        <end position="414"/>
    </location>
</feature>
<feature type="binding site" evidence="1">
    <location>
        <begin position="53"/>
        <end position="60"/>
    </location>
    <ligand>
        <name>ATP</name>
        <dbReference type="ChEBI" id="CHEBI:30616"/>
    </ligand>
</feature>
<proteinExistence type="inferred from homology"/>
<comment type="function">
    <text evidence="1">DEAD-box RNA helicase involved in RNA degradation. Has RNA-dependent ATPase activity and unwinds double-stranded RNA.</text>
</comment>
<comment type="catalytic activity">
    <reaction evidence="1">
        <text>ATP + H2O = ADP + phosphate + H(+)</text>
        <dbReference type="Rhea" id="RHEA:13065"/>
        <dbReference type="ChEBI" id="CHEBI:15377"/>
        <dbReference type="ChEBI" id="CHEBI:15378"/>
        <dbReference type="ChEBI" id="CHEBI:30616"/>
        <dbReference type="ChEBI" id="CHEBI:43474"/>
        <dbReference type="ChEBI" id="CHEBI:456216"/>
        <dbReference type="EC" id="3.6.4.13"/>
    </reaction>
</comment>
<comment type="subunit">
    <text evidence="1">Component of the RNA degradosome, which is a multiprotein complex involved in RNA processing and mRNA degradation.</text>
</comment>
<comment type="subcellular location">
    <subcellularLocation>
        <location evidence="1">Cytoplasm</location>
    </subcellularLocation>
</comment>
<comment type="similarity">
    <text evidence="1">Belongs to the DEAD box helicase family. RhlB subfamily.</text>
</comment>
<gene>
    <name evidence="1" type="primary">rhlB</name>
    <name type="ordered locus">EC55989_4251</name>
</gene>
<accession>B7L8B6</accession>
<name>RHLB_ECO55</name>
<keyword id="KW-0067">ATP-binding</keyword>
<keyword id="KW-0963">Cytoplasm</keyword>
<keyword id="KW-0347">Helicase</keyword>
<keyword id="KW-0378">Hydrolase</keyword>
<keyword id="KW-0547">Nucleotide-binding</keyword>
<keyword id="KW-1185">Reference proteome</keyword>
<keyword id="KW-0694">RNA-binding</keyword>
<evidence type="ECO:0000255" key="1">
    <source>
        <dbReference type="HAMAP-Rule" id="MF_00661"/>
    </source>
</evidence>
<evidence type="ECO:0000256" key="2">
    <source>
        <dbReference type="SAM" id="MobiDB-lite"/>
    </source>
</evidence>
<organism>
    <name type="scientific">Escherichia coli (strain 55989 / EAEC)</name>
    <dbReference type="NCBI Taxonomy" id="585055"/>
    <lineage>
        <taxon>Bacteria</taxon>
        <taxon>Pseudomonadati</taxon>
        <taxon>Pseudomonadota</taxon>
        <taxon>Gammaproteobacteria</taxon>
        <taxon>Enterobacterales</taxon>
        <taxon>Enterobacteriaceae</taxon>
        <taxon>Escherichia</taxon>
    </lineage>
</organism>